<comment type="function">
    <text evidence="1">Involved in the regulation of the intracellular balance of NAD and NADP, and is a key enzyme in the biosynthesis of NADP. Catalyzes specifically the phosphorylation on 2'-hydroxyl of the adenosine moiety of NAD to yield NADP.</text>
</comment>
<comment type="catalytic activity">
    <reaction evidence="1">
        <text>NAD(+) + ATP = ADP + NADP(+) + H(+)</text>
        <dbReference type="Rhea" id="RHEA:18629"/>
        <dbReference type="ChEBI" id="CHEBI:15378"/>
        <dbReference type="ChEBI" id="CHEBI:30616"/>
        <dbReference type="ChEBI" id="CHEBI:57540"/>
        <dbReference type="ChEBI" id="CHEBI:58349"/>
        <dbReference type="ChEBI" id="CHEBI:456216"/>
        <dbReference type="EC" id="2.7.1.23"/>
    </reaction>
</comment>
<comment type="cofactor">
    <cofactor evidence="1">
        <name>a divalent metal cation</name>
        <dbReference type="ChEBI" id="CHEBI:60240"/>
    </cofactor>
</comment>
<comment type="subcellular location">
    <subcellularLocation>
        <location evidence="1">Cytoplasm</location>
    </subcellularLocation>
</comment>
<comment type="similarity">
    <text evidence="1">Belongs to the NAD kinase family.</text>
</comment>
<accession>Q83GX6</accession>
<keyword id="KW-0067">ATP-binding</keyword>
<keyword id="KW-0963">Cytoplasm</keyword>
<keyword id="KW-0418">Kinase</keyword>
<keyword id="KW-0520">NAD</keyword>
<keyword id="KW-0521">NADP</keyword>
<keyword id="KW-0547">Nucleotide-binding</keyword>
<keyword id="KW-1185">Reference proteome</keyword>
<keyword id="KW-0808">Transferase</keyword>
<evidence type="ECO:0000255" key="1">
    <source>
        <dbReference type="HAMAP-Rule" id="MF_00361"/>
    </source>
</evidence>
<name>NADK_TROWT</name>
<organism>
    <name type="scientific">Tropheryma whipplei (strain Twist)</name>
    <name type="common">Whipple's bacillus</name>
    <dbReference type="NCBI Taxonomy" id="203267"/>
    <lineage>
        <taxon>Bacteria</taxon>
        <taxon>Bacillati</taxon>
        <taxon>Actinomycetota</taxon>
        <taxon>Actinomycetes</taxon>
        <taxon>Micrococcales</taxon>
        <taxon>Tropherymataceae</taxon>
        <taxon>Tropheryma</taxon>
    </lineage>
</organism>
<feature type="chain" id="PRO_0000120683" description="NAD kinase">
    <location>
        <begin position="1"/>
        <end position="301"/>
    </location>
</feature>
<feature type="active site" description="Proton acceptor" evidence="1">
    <location>
        <position position="84"/>
    </location>
</feature>
<feature type="binding site" evidence="1">
    <location>
        <begin position="84"/>
        <end position="85"/>
    </location>
    <ligand>
        <name>NAD(+)</name>
        <dbReference type="ChEBI" id="CHEBI:57540"/>
    </ligand>
</feature>
<feature type="binding site" evidence="1">
    <location>
        <position position="89"/>
    </location>
    <ligand>
        <name>NAD(+)</name>
        <dbReference type="ChEBI" id="CHEBI:57540"/>
    </ligand>
</feature>
<feature type="binding site" evidence="1">
    <location>
        <begin position="158"/>
        <end position="159"/>
    </location>
    <ligand>
        <name>NAD(+)</name>
        <dbReference type="ChEBI" id="CHEBI:57540"/>
    </ligand>
</feature>
<feature type="binding site" evidence="1">
    <location>
        <position position="169"/>
    </location>
    <ligand>
        <name>NAD(+)</name>
        <dbReference type="ChEBI" id="CHEBI:57540"/>
    </ligand>
</feature>
<feature type="binding site" evidence="1">
    <location>
        <position position="188"/>
    </location>
    <ligand>
        <name>NAD(+)</name>
        <dbReference type="ChEBI" id="CHEBI:57540"/>
    </ligand>
</feature>
<feature type="binding site" evidence="1">
    <location>
        <begin position="199"/>
        <end position="204"/>
    </location>
    <ligand>
        <name>NAD(+)</name>
        <dbReference type="ChEBI" id="CHEBI:57540"/>
    </ligand>
</feature>
<feature type="binding site" evidence="1">
    <location>
        <position position="258"/>
    </location>
    <ligand>
        <name>NAD(+)</name>
        <dbReference type="ChEBI" id="CHEBI:57540"/>
    </ligand>
</feature>
<gene>
    <name evidence="1" type="primary">nadK</name>
    <name type="ordered locus">TWT_103</name>
</gene>
<dbReference type="EC" id="2.7.1.23" evidence="1"/>
<dbReference type="EMBL" id="AE014184">
    <property type="protein sequence ID" value="AAO44200.1"/>
    <property type="molecule type" value="Genomic_DNA"/>
</dbReference>
<dbReference type="RefSeq" id="WP_011102352.1">
    <property type="nucleotide sequence ID" value="NC_004572.3"/>
</dbReference>
<dbReference type="SMR" id="Q83GX6"/>
<dbReference type="STRING" id="203267.TWT_103"/>
<dbReference type="KEGG" id="twh:TWT_103"/>
<dbReference type="eggNOG" id="COG0061">
    <property type="taxonomic scope" value="Bacteria"/>
</dbReference>
<dbReference type="HOGENOM" id="CLU_008831_0_0_11"/>
<dbReference type="OrthoDB" id="9774737at2"/>
<dbReference type="Proteomes" id="UP000002200">
    <property type="component" value="Chromosome"/>
</dbReference>
<dbReference type="GO" id="GO:0005737">
    <property type="term" value="C:cytoplasm"/>
    <property type="evidence" value="ECO:0007669"/>
    <property type="project" value="UniProtKB-SubCell"/>
</dbReference>
<dbReference type="GO" id="GO:0005524">
    <property type="term" value="F:ATP binding"/>
    <property type="evidence" value="ECO:0007669"/>
    <property type="project" value="UniProtKB-KW"/>
</dbReference>
<dbReference type="GO" id="GO:0046872">
    <property type="term" value="F:metal ion binding"/>
    <property type="evidence" value="ECO:0007669"/>
    <property type="project" value="UniProtKB-UniRule"/>
</dbReference>
<dbReference type="GO" id="GO:0051287">
    <property type="term" value="F:NAD binding"/>
    <property type="evidence" value="ECO:0007669"/>
    <property type="project" value="UniProtKB-ARBA"/>
</dbReference>
<dbReference type="GO" id="GO:0003951">
    <property type="term" value="F:NAD+ kinase activity"/>
    <property type="evidence" value="ECO:0007669"/>
    <property type="project" value="UniProtKB-UniRule"/>
</dbReference>
<dbReference type="GO" id="GO:0019674">
    <property type="term" value="P:NAD metabolic process"/>
    <property type="evidence" value="ECO:0007669"/>
    <property type="project" value="InterPro"/>
</dbReference>
<dbReference type="GO" id="GO:0006741">
    <property type="term" value="P:NADP biosynthetic process"/>
    <property type="evidence" value="ECO:0007669"/>
    <property type="project" value="UniProtKB-UniRule"/>
</dbReference>
<dbReference type="Gene3D" id="3.40.50.10330">
    <property type="entry name" value="Probable inorganic polyphosphate/atp-NAD kinase, domain 1"/>
    <property type="match status" value="1"/>
</dbReference>
<dbReference type="Gene3D" id="2.60.200.30">
    <property type="entry name" value="Probable inorganic polyphosphate/atp-NAD kinase, domain 2"/>
    <property type="match status" value="1"/>
</dbReference>
<dbReference type="HAMAP" id="MF_00361">
    <property type="entry name" value="NAD_kinase"/>
    <property type="match status" value="1"/>
</dbReference>
<dbReference type="InterPro" id="IPR017438">
    <property type="entry name" value="ATP-NAD_kinase_N"/>
</dbReference>
<dbReference type="InterPro" id="IPR017437">
    <property type="entry name" value="ATP-NAD_kinase_PpnK-typ_C"/>
</dbReference>
<dbReference type="InterPro" id="IPR016064">
    <property type="entry name" value="NAD/diacylglycerol_kinase_sf"/>
</dbReference>
<dbReference type="InterPro" id="IPR002504">
    <property type="entry name" value="NADK"/>
</dbReference>
<dbReference type="PANTHER" id="PTHR20275">
    <property type="entry name" value="NAD KINASE"/>
    <property type="match status" value="1"/>
</dbReference>
<dbReference type="PANTHER" id="PTHR20275:SF0">
    <property type="entry name" value="NAD KINASE"/>
    <property type="match status" value="1"/>
</dbReference>
<dbReference type="Pfam" id="PF01513">
    <property type="entry name" value="NAD_kinase"/>
    <property type="match status" value="1"/>
</dbReference>
<dbReference type="Pfam" id="PF20143">
    <property type="entry name" value="NAD_kinase_C"/>
    <property type="match status" value="1"/>
</dbReference>
<dbReference type="SUPFAM" id="SSF111331">
    <property type="entry name" value="NAD kinase/diacylglycerol kinase-like"/>
    <property type="match status" value="1"/>
</dbReference>
<reference key="1">
    <citation type="journal article" date="2003" name="Genome Res.">
        <title>Tropheryma whipplei twist: a human pathogenic Actinobacteria with a reduced genome.</title>
        <authorList>
            <person name="Raoult D."/>
            <person name="Ogata H."/>
            <person name="Audic S."/>
            <person name="Robert C."/>
            <person name="Suhre K."/>
            <person name="Drancourt M."/>
            <person name="Claverie J.-M."/>
        </authorList>
    </citation>
    <scope>NUCLEOTIDE SEQUENCE [LARGE SCALE GENOMIC DNA]</scope>
    <source>
        <strain>Twist</strain>
    </source>
</reference>
<protein>
    <recommendedName>
        <fullName evidence="1">NAD kinase</fullName>
        <ecNumber evidence="1">2.7.1.23</ecNumber>
    </recommendedName>
    <alternativeName>
        <fullName evidence="1">ATP-dependent NAD kinase</fullName>
    </alternativeName>
</protein>
<proteinExistence type="inferred from homology"/>
<sequence>MRVYIAHNGCLEAEPIYGTICELVAQRKMSVITDPHARNNESARNTDSGVVSLNQAGRNKYLDQETTSRSINVPFCAGISIGGDGTFLRMARDLKNTGTPLFGVNMGRMGFLVDIEPEDIVNLVENIVKGEYTEEKRLPITASVQRGGKKIHDEWAVNEITIERKVEGKVVDIEVFVDGCRVMDISCNGIIIATATGSTAYSFSSGGPIVWPEMKVTLVVPVSPHELFAKPIVLPDNRSILLKVTSRDNKVVLCSDGQVRLCLQSGDEIACHVGKVPVVFGRVKKGCFAEHLVKKFNLQTA</sequence>